<gene>
    <name evidence="1" type="primary">gltX2</name>
    <name type="ordered locus">OTBS_1957</name>
</gene>
<dbReference type="EC" id="6.1.1.17" evidence="1"/>
<dbReference type="EMBL" id="AM494475">
    <property type="protein sequence ID" value="CAM81052.1"/>
    <property type="status" value="ALT_INIT"/>
    <property type="molecule type" value="Genomic_DNA"/>
</dbReference>
<dbReference type="RefSeq" id="WP_041621553.1">
    <property type="nucleotide sequence ID" value="NC_009488.1"/>
</dbReference>
<dbReference type="SMR" id="A5CFB7"/>
<dbReference type="KEGG" id="ots:OTBS_1957"/>
<dbReference type="eggNOG" id="COG0008">
    <property type="taxonomic scope" value="Bacteria"/>
</dbReference>
<dbReference type="HOGENOM" id="CLU_015768_6_1_5"/>
<dbReference type="Proteomes" id="UP000001565">
    <property type="component" value="Chromosome"/>
</dbReference>
<dbReference type="GO" id="GO:0005737">
    <property type="term" value="C:cytoplasm"/>
    <property type="evidence" value="ECO:0007669"/>
    <property type="project" value="UniProtKB-SubCell"/>
</dbReference>
<dbReference type="GO" id="GO:0005524">
    <property type="term" value="F:ATP binding"/>
    <property type="evidence" value="ECO:0007669"/>
    <property type="project" value="UniProtKB-UniRule"/>
</dbReference>
<dbReference type="GO" id="GO:0004818">
    <property type="term" value="F:glutamate-tRNA ligase activity"/>
    <property type="evidence" value="ECO:0007669"/>
    <property type="project" value="UniProtKB-UniRule"/>
</dbReference>
<dbReference type="GO" id="GO:0000049">
    <property type="term" value="F:tRNA binding"/>
    <property type="evidence" value="ECO:0007669"/>
    <property type="project" value="InterPro"/>
</dbReference>
<dbReference type="GO" id="GO:0006424">
    <property type="term" value="P:glutamyl-tRNA aminoacylation"/>
    <property type="evidence" value="ECO:0007669"/>
    <property type="project" value="UniProtKB-UniRule"/>
</dbReference>
<dbReference type="Gene3D" id="1.10.10.350">
    <property type="match status" value="1"/>
</dbReference>
<dbReference type="Gene3D" id="3.40.50.620">
    <property type="entry name" value="HUPs"/>
    <property type="match status" value="1"/>
</dbReference>
<dbReference type="HAMAP" id="MF_00022">
    <property type="entry name" value="Glu_tRNA_synth_type1"/>
    <property type="match status" value="1"/>
</dbReference>
<dbReference type="InterPro" id="IPR045462">
    <property type="entry name" value="aa-tRNA-synth_I_cd-bd"/>
</dbReference>
<dbReference type="InterPro" id="IPR020751">
    <property type="entry name" value="aa-tRNA-synth_I_codon-bd_sub2"/>
</dbReference>
<dbReference type="InterPro" id="IPR001412">
    <property type="entry name" value="aa-tRNA-synth_I_CS"/>
</dbReference>
<dbReference type="InterPro" id="IPR008925">
    <property type="entry name" value="aa_tRNA-synth_I_cd-bd_sf"/>
</dbReference>
<dbReference type="InterPro" id="IPR004527">
    <property type="entry name" value="Glu-tRNA-ligase_bac/mito"/>
</dbReference>
<dbReference type="InterPro" id="IPR000924">
    <property type="entry name" value="Glu/Gln-tRNA-synth"/>
</dbReference>
<dbReference type="InterPro" id="IPR020058">
    <property type="entry name" value="Glu/Gln-tRNA-synth_Ib_cat-dom"/>
</dbReference>
<dbReference type="InterPro" id="IPR049940">
    <property type="entry name" value="GluQ/Sye"/>
</dbReference>
<dbReference type="InterPro" id="IPR014729">
    <property type="entry name" value="Rossmann-like_a/b/a_fold"/>
</dbReference>
<dbReference type="NCBIfam" id="TIGR00464">
    <property type="entry name" value="gltX_bact"/>
    <property type="match status" value="1"/>
</dbReference>
<dbReference type="PANTHER" id="PTHR43311">
    <property type="entry name" value="GLUTAMATE--TRNA LIGASE"/>
    <property type="match status" value="1"/>
</dbReference>
<dbReference type="PANTHER" id="PTHR43311:SF2">
    <property type="entry name" value="GLUTAMATE--TRNA LIGASE, MITOCHONDRIAL-RELATED"/>
    <property type="match status" value="1"/>
</dbReference>
<dbReference type="Pfam" id="PF19269">
    <property type="entry name" value="Anticodon_2"/>
    <property type="match status" value="1"/>
</dbReference>
<dbReference type="Pfam" id="PF00749">
    <property type="entry name" value="tRNA-synt_1c"/>
    <property type="match status" value="1"/>
</dbReference>
<dbReference type="PRINTS" id="PR00987">
    <property type="entry name" value="TRNASYNTHGLU"/>
</dbReference>
<dbReference type="SUPFAM" id="SSF48163">
    <property type="entry name" value="An anticodon-binding domain of class I aminoacyl-tRNA synthetases"/>
    <property type="match status" value="1"/>
</dbReference>
<dbReference type="SUPFAM" id="SSF52374">
    <property type="entry name" value="Nucleotidylyl transferase"/>
    <property type="match status" value="1"/>
</dbReference>
<dbReference type="PROSITE" id="PS00178">
    <property type="entry name" value="AA_TRNA_LIGASE_I"/>
    <property type="match status" value="1"/>
</dbReference>
<reference key="1">
    <citation type="journal article" date="2007" name="Proc. Natl. Acad. Sci. U.S.A.">
        <title>The Orientia tsutsugamushi genome reveals massive proliferation of conjugative type IV secretion system and host-cell interaction genes.</title>
        <authorList>
            <person name="Cho N.-H."/>
            <person name="Kim H.-R."/>
            <person name="Lee J.-H."/>
            <person name="Kim S.-Y."/>
            <person name="Kim J."/>
            <person name="Cha S."/>
            <person name="Kim S.-Y."/>
            <person name="Darby A.C."/>
            <person name="Fuxelius H.-H."/>
            <person name="Yin J."/>
            <person name="Kim J.H."/>
            <person name="Kim J."/>
            <person name="Lee S.J."/>
            <person name="Koh Y.-S."/>
            <person name="Jang W.-J."/>
            <person name="Park K.-H."/>
            <person name="Andersson S.G.E."/>
            <person name="Choi M.-S."/>
            <person name="Kim I.-S."/>
        </authorList>
    </citation>
    <scope>NUCLEOTIDE SEQUENCE [LARGE SCALE GENOMIC DNA]</scope>
    <source>
        <strain>Boryong</strain>
    </source>
</reference>
<feature type="chain" id="PRO_0000367726" description="Glutamate--tRNA ligase 2">
    <location>
        <begin position="1"/>
        <end position="448"/>
    </location>
</feature>
<feature type="short sequence motif" description="'HIGH' region" evidence="1">
    <location>
        <begin position="9"/>
        <end position="19"/>
    </location>
</feature>
<feature type="short sequence motif" description="'KMSKS' region" evidence="1">
    <location>
        <begin position="240"/>
        <end position="244"/>
    </location>
</feature>
<feature type="binding site" evidence="1">
    <location>
        <position position="243"/>
    </location>
    <ligand>
        <name>ATP</name>
        <dbReference type="ChEBI" id="CHEBI:30616"/>
    </ligand>
</feature>
<evidence type="ECO:0000255" key="1">
    <source>
        <dbReference type="HAMAP-Rule" id="MF_00022"/>
    </source>
</evidence>
<evidence type="ECO:0000305" key="2"/>
<protein>
    <recommendedName>
        <fullName evidence="1">Glutamate--tRNA ligase 2</fullName>
        <ecNumber evidence="1">6.1.1.17</ecNumber>
    </recommendedName>
    <alternativeName>
        <fullName evidence="1">Glutamyl-tRNA synthetase 2</fullName>
        <shortName evidence="1">GluRS 2</shortName>
    </alternativeName>
</protein>
<keyword id="KW-0030">Aminoacyl-tRNA synthetase</keyword>
<keyword id="KW-0067">ATP-binding</keyword>
<keyword id="KW-0963">Cytoplasm</keyword>
<keyword id="KW-0436">Ligase</keyword>
<keyword id="KW-0547">Nucleotide-binding</keyword>
<keyword id="KW-0648">Protein biosynthesis</keyword>
<keyword id="KW-1185">Reference proteome</keyword>
<comment type="function">
    <text evidence="1">Catalyzes the attachment of glutamate to tRNA(Glu) in a two-step reaction: glutamate is first activated by ATP to form Glu-AMP and then transferred to the acceptor end of tRNA(Glu).</text>
</comment>
<comment type="catalytic activity">
    <reaction evidence="1">
        <text>tRNA(Glu) + L-glutamate + ATP = L-glutamyl-tRNA(Glu) + AMP + diphosphate</text>
        <dbReference type="Rhea" id="RHEA:23540"/>
        <dbReference type="Rhea" id="RHEA-COMP:9663"/>
        <dbReference type="Rhea" id="RHEA-COMP:9680"/>
        <dbReference type="ChEBI" id="CHEBI:29985"/>
        <dbReference type="ChEBI" id="CHEBI:30616"/>
        <dbReference type="ChEBI" id="CHEBI:33019"/>
        <dbReference type="ChEBI" id="CHEBI:78442"/>
        <dbReference type="ChEBI" id="CHEBI:78520"/>
        <dbReference type="ChEBI" id="CHEBI:456215"/>
        <dbReference type="EC" id="6.1.1.17"/>
    </reaction>
</comment>
<comment type="subunit">
    <text evidence="1">Monomer.</text>
</comment>
<comment type="subcellular location">
    <subcellularLocation>
        <location evidence="1">Cytoplasm</location>
    </subcellularLocation>
</comment>
<comment type="similarity">
    <text evidence="1">Belongs to the class-I aminoacyl-tRNA synthetase family. Glutamate--tRNA ligase type 1 subfamily.</text>
</comment>
<comment type="sequence caution" evidence="2">
    <conflict type="erroneous initiation">
        <sequence resource="EMBL-CDS" id="CAM81052"/>
    </conflict>
</comment>
<name>SYE2_ORITB</name>
<organism>
    <name type="scientific">Orientia tsutsugamushi (strain Boryong)</name>
    <name type="common">Rickettsia tsutsugamushi</name>
    <dbReference type="NCBI Taxonomy" id="357244"/>
    <lineage>
        <taxon>Bacteria</taxon>
        <taxon>Pseudomonadati</taxon>
        <taxon>Pseudomonadota</taxon>
        <taxon>Alphaproteobacteria</taxon>
        <taxon>Rickettsiales</taxon>
        <taxon>Rickettsiaceae</taxon>
        <taxon>Rickettsieae</taxon>
        <taxon>Orientia</taxon>
    </lineage>
</organism>
<accession>A5CFB7</accession>
<sequence length="448" mass="51389">MTVITRFAPSPTGKLHIGNVRVALVNWLYAQKYNGNFILRIDDTDRDRSKVEYHEAIIKDLQWLGINWNSSFLQSIRFNKYKAAKQYLISSGRLYECYETPEMLEIERKRQLTSGYPPIYSRKALELTKAQKVQLQAEGYKVHYRFLIDRNKPIIWNDLIKGEIKYDGSNISDPIVIKEDGTMIYMLCSVIDDIEYRISHIIRGEDHITNTAIQIQMFEALGAAIPQLGHLSLIKSDSGKISKRIGGFTIDYLRDQLGIEPMAVNNLLALSGTSNNVDAYFSLESLITKFDLSAFSKSAIIYNENELVTLNHKLLVNTEYDTIKHRLTAIGLPDVTKEFWLAVRHNLNTLNDIKIWWQICYLPTLDKFQEQDAEFLKLAAGLLPSGKLTDNSWDDWVQNIIKATNRRGKALFMPLRLALTGITYGPELKYLLPLIGGEEVKARLLRHQ</sequence>
<proteinExistence type="inferred from homology"/>